<protein>
    <recommendedName>
        <fullName>Putative ABC transporter substrate-binding lipoprotein YhfQ</fullName>
    </recommendedName>
</protein>
<dbReference type="EMBL" id="Y14084">
    <property type="protein sequence ID" value="CAA74540.1"/>
    <property type="status" value="ALT_INIT"/>
    <property type="molecule type" value="Genomic_DNA"/>
</dbReference>
<dbReference type="EMBL" id="AL009126">
    <property type="protein sequence ID" value="CAB12873.2"/>
    <property type="molecule type" value="Genomic_DNA"/>
</dbReference>
<dbReference type="PIR" id="F69831">
    <property type="entry name" value="F69831"/>
</dbReference>
<dbReference type="RefSeq" id="NP_388914.2">
    <property type="nucleotide sequence ID" value="NC_000964.3"/>
</dbReference>
<dbReference type="RefSeq" id="WP_003233159.1">
    <property type="nucleotide sequence ID" value="NZ_OZ025638.1"/>
</dbReference>
<dbReference type="SMR" id="C0SP94"/>
<dbReference type="FunCoup" id="C0SP94">
    <property type="interactions" value="94"/>
</dbReference>
<dbReference type="STRING" id="224308.BSU10330"/>
<dbReference type="PaxDb" id="224308-BSU10330"/>
<dbReference type="EnsemblBacteria" id="CAB12873">
    <property type="protein sequence ID" value="CAB12873"/>
    <property type="gene ID" value="BSU_10330"/>
</dbReference>
<dbReference type="GeneID" id="936324"/>
<dbReference type="KEGG" id="bsu:BSU10330"/>
<dbReference type="PATRIC" id="fig|224308.179.peg.1111"/>
<dbReference type="eggNOG" id="COG4594">
    <property type="taxonomic scope" value="Bacteria"/>
</dbReference>
<dbReference type="InParanoid" id="C0SP94"/>
<dbReference type="OrthoDB" id="9793175at2"/>
<dbReference type="PhylomeDB" id="C0SP94"/>
<dbReference type="BioCyc" id="BSUB:BSU10330-MONOMER"/>
<dbReference type="Proteomes" id="UP000001570">
    <property type="component" value="Chromosome"/>
</dbReference>
<dbReference type="GO" id="GO:0045121">
    <property type="term" value="C:membrane raft"/>
    <property type="evidence" value="ECO:0007669"/>
    <property type="project" value="UniProtKB-SubCell"/>
</dbReference>
<dbReference type="GO" id="GO:0030288">
    <property type="term" value="C:outer membrane-bounded periplasmic space"/>
    <property type="evidence" value="ECO:0000318"/>
    <property type="project" value="GO_Central"/>
</dbReference>
<dbReference type="GO" id="GO:0005886">
    <property type="term" value="C:plasma membrane"/>
    <property type="evidence" value="ECO:0007669"/>
    <property type="project" value="UniProtKB-SubCell"/>
</dbReference>
<dbReference type="GO" id="GO:1901678">
    <property type="term" value="P:iron coordination entity transport"/>
    <property type="evidence" value="ECO:0007669"/>
    <property type="project" value="UniProtKB-ARBA"/>
</dbReference>
<dbReference type="CDD" id="cd01146">
    <property type="entry name" value="FhuD"/>
    <property type="match status" value="1"/>
</dbReference>
<dbReference type="FunFam" id="3.40.50.1980:FF:000003">
    <property type="entry name" value="Iron ABC transporter substrate-binding protein"/>
    <property type="match status" value="1"/>
</dbReference>
<dbReference type="Gene3D" id="3.40.50.1980">
    <property type="entry name" value="Nitrogenase molybdenum iron protein domain"/>
    <property type="match status" value="2"/>
</dbReference>
<dbReference type="InterPro" id="IPR002491">
    <property type="entry name" value="ABC_transptr_periplasmic_BD"/>
</dbReference>
<dbReference type="InterPro" id="IPR051313">
    <property type="entry name" value="Bact_iron-sidero_bind"/>
</dbReference>
<dbReference type="PANTHER" id="PTHR30532:SF29">
    <property type="entry name" value="FE(3+) DICITRATE-BINDING PERIPLASMIC PROTEIN"/>
    <property type="match status" value="1"/>
</dbReference>
<dbReference type="PANTHER" id="PTHR30532">
    <property type="entry name" value="IRON III DICITRATE-BINDING PERIPLASMIC PROTEIN"/>
    <property type="match status" value="1"/>
</dbReference>
<dbReference type="Pfam" id="PF01497">
    <property type="entry name" value="Peripla_BP_2"/>
    <property type="match status" value="1"/>
</dbReference>
<dbReference type="SUPFAM" id="SSF53807">
    <property type="entry name" value="Helical backbone' metal receptor"/>
    <property type="match status" value="1"/>
</dbReference>
<dbReference type="PROSITE" id="PS50983">
    <property type="entry name" value="FE_B12_PBP"/>
    <property type="match status" value="1"/>
</dbReference>
<dbReference type="PROSITE" id="PS51257">
    <property type="entry name" value="PROKAR_LIPOPROTEIN"/>
    <property type="match status" value="1"/>
</dbReference>
<gene>
    <name type="primary">yhfQ</name>
    <name type="ordered locus">BSU10330</name>
</gene>
<accession>C0SP94</accession>
<accession>O07616</accession>
<accession>Q796T6</accession>
<comment type="subunit">
    <text evidence="5">Interacts with FloT.</text>
</comment>
<comment type="subcellular location">
    <subcellularLocation>
        <location evidence="1 4 5">Cell membrane</location>
        <topology evidence="1 4">Lipid-anchor</topology>
    </subcellularLocation>
    <subcellularLocation>
        <location evidence="5">Membrane raft</location>
        <topology>Lipid-anchor</topology>
    </subcellularLocation>
    <text evidence="5">Present in detergent-resistant membrane (DRM) fractions that may be equivalent to eukaryotic membrane rafts; these rafts include proteins involved in signaling, molecule trafficking and protein secretion.</text>
</comment>
<comment type="induction">
    <text evidence="3">Transcriptionally regulated by fur; repressed by iron.</text>
</comment>
<comment type="similarity">
    <text evidence="6">Belongs to the bacterial solute-binding protein 8 family.</text>
</comment>
<comment type="sequence caution" evidence="6">
    <conflict type="erroneous initiation">
        <sequence resource="EMBL-CDS" id="CAA74540"/>
    </conflict>
    <text>Extended N-terminus.</text>
</comment>
<proteinExistence type="evidence at protein level"/>
<name>YHFQ_BACSU</name>
<keyword id="KW-1003">Cell membrane</keyword>
<keyword id="KW-0449">Lipoprotein</keyword>
<keyword id="KW-0472">Membrane</keyword>
<keyword id="KW-0564">Palmitate</keyword>
<keyword id="KW-1185">Reference proteome</keyword>
<keyword id="KW-0732">Signal</keyword>
<keyword id="KW-0813">Transport</keyword>
<organism>
    <name type="scientific">Bacillus subtilis (strain 168)</name>
    <dbReference type="NCBI Taxonomy" id="224308"/>
    <lineage>
        <taxon>Bacteria</taxon>
        <taxon>Bacillati</taxon>
        <taxon>Bacillota</taxon>
        <taxon>Bacilli</taxon>
        <taxon>Bacillales</taxon>
        <taxon>Bacillaceae</taxon>
        <taxon>Bacillus</taxon>
    </lineage>
</organism>
<feature type="signal peptide" evidence="1">
    <location>
        <begin position="1"/>
        <end position="19"/>
    </location>
</feature>
<feature type="chain" id="PRO_0000390292" description="Putative ABC transporter substrate-binding lipoprotein YhfQ">
    <location>
        <begin position="20"/>
        <end position="323"/>
    </location>
</feature>
<feature type="domain" description="Fe/B12 periplasmic-binding" evidence="2">
    <location>
        <begin position="51"/>
        <end position="322"/>
    </location>
</feature>
<feature type="lipid moiety-binding region" description="N-palmitoyl cysteine" evidence="1">
    <location>
        <position position="20"/>
    </location>
</feature>
<feature type="lipid moiety-binding region" description="S-diacylglycerol cysteine" evidence="1">
    <location>
        <position position="20"/>
    </location>
</feature>
<sequence length="323" mass="35489">MKKTLIILTVLLLSVLTAACSSSSGNQNSKEHKVAVTHDLGKTNVPEHPKRVVVLELGFIDTLLDLGITPVGVADDNKAKQLINKDVLKKIDGYTSVGTRSQPSMEKIASLKPDLIIADTTRHKKVYDQLKKIAPTIALNNLNADYQDTIDASLTIAKAVGKEKEMEKKLTAHEEKLSETKQKISANSQSVLLIGNTNDTIMARDENFFTSRLLTQVGYRYAISTSGNSDSSNGGDSVNMKMTLEQLLKTDPDVIILMTGKTDDLDADGKRPIEKNVLWKKLKAVKNGHVYHVDRAVWSLRRSVDGANAILDELQKEMPAAKK</sequence>
<evidence type="ECO:0000255" key="1">
    <source>
        <dbReference type="PROSITE-ProRule" id="PRU00303"/>
    </source>
</evidence>
<evidence type="ECO:0000255" key="2">
    <source>
        <dbReference type="PROSITE-ProRule" id="PRU00344"/>
    </source>
</evidence>
<evidence type="ECO:0000269" key="3">
    <source>
    </source>
</evidence>
<evidence type="ECO:0000269" key="4">
    <source>
    </source>
</evidence>
<evidence type="ECO:0000269" key="5">
    <source>
    </source>
</evidence>
<evidence type="ECO:0000305" key="6"/>
<reference key="1">
    <citation type="submission" date="1997-06" db="EMBL/GenBank/DDBJ databases">
        <authorList>
            <person name="Noback M.A."/>
            <person name="Terpstra P."/>
            <person name="Holsappel S."/>
            <person name="Venema G."/>
            <person name="Bron S."/>
        </authorList>
    </citation>
    <scope>NUCLEOTIDE SEQUENCE [GENOMIC DNA]</scope>
    <source>
        <strain>168</strain>
    </source>
</reference>
<reference key="2">
    <citation type="journal article" date="1997" name="Nature">
        <title>The complete genome sequence of the Gram-positive bacterium Bacillus subtilis.</title>
        <authorList>
            <person name="Kunst F."/>
            <person name="Ogasawara N."/>
            <person name="Moszer I."/>
            <person name="Albertini A.M."/>
            <person name="Alloni G."/>
            <person name="Azevedo V."/>
            <person name="Bertero M.G."/>
            <person name="Bessieres P."/>
            <person name="Bolotin A."/>
            <person name="Borchert S."/>
            <person name="Borriss R."/>
            <person name="Boursier L."/>
            <person name="Brans A."/>
            <person name="Braun M."/>
            <person name="Brignell S.C."/>
            <person name="Bron S."/>
            <person name="Brouillet S."/>
            <person name="Bruschi C.V."/>
            <person name="Caldwell B."/>
            <person name="Capuano V."/>
            <person name="Carter N.M."/>
            <person name="Choi S.-K."/>
            <person name="Codani J.-J."/>
            <person name="Connerton I.F."/>
            <person name="Cummings N.J."/>
            <person name="Daniel R.A."/>
            <person name="Denizot F."/>
            <person name="Devine K.M."/>
            <person name="Duesterhoeft A."/>
            <person name="Ehrlich S.D."/>
            <person name="Emmerson P.T."/>
            <person name="Entian K.-D."/>
            <person name="Errington J."/>
            <person name="Fabret C."/>
            <person name="Ferrari E."/>
            <person name="Foulger D."/>
            <person name="Fritz C."/>
            <person name="Fujita M."/>
            <person name="Fujita Y."/>
            <person name="Fuma S."/>
            <person name="Galizzi A."/>
            <person name="Galleron N."/>
            <person name="Ghim S.-Y."/>
            <person name="Glaser P."/>
            <person name="Goffeau A."/>
            <person name="Golightly E.J."/>
            <person name="Grandi G."/>
            <person name="Guiseppi G."/>
            <person name="Guy B.J."/>
            <person name="Haga K."/>
            <person name="Haiech J."/>
            <person name="Harwood C.R."/>
            <person name="Henaut A."/>
            <person name="Hilbert H."/>
            <person name="Holsappel S."/>
            <person name="Hosono S."/>
            <person name="Hullo M.-F."/>
            <person name="Itaya M."/>
            <person name="Jones L.-M."/>
            <person name="Joris B."/>
            <person name="Karamata D."/>
            <person name="Kasahara Y."/>
            <person name="Klaerr-Blanchard M."/>
            <person name="Klein C."/>
            <person name="Kobayashi Y."/>
            <person name="Koetter P."/>
            <person name="Koningstein G."/>
            <person name="Krogh S."/>
            <person name="Kumano M."/>
            <person name="Kurita K."/>
            <person name="Lapidus A."/>
            <person name="Lardinois S."/>
            <person name="Lauber J."/>
            <person name="Lazarevic V."/>
            <person name="Lee S.-M."/>
            <person name="Levine A."/>
            <person name="Liu H."/>
            <person name="Masuda S."/>
            <person name="Mauel C."/>
            <person name="Medigue C."/>
            <person name="Medina N."/>
            <person name="Mellado R.P."/>
            <person name="Mizuno M."/>
            <person name="Moestl D."/>
            <person name="Nakai S."/>
            <person name="Noback M."/>
            <person name="Noone D."/>
            <person name="O'Reilly M."/>
            <person name="Ogawa K."/>
            <person name="Ogiwara A."/>
            <person name="Oudega B."/>
            <person name="Park S.-H."/>
            <person name="Parro V."/>
            <person name="Pohl T.M."/>
            <person name="Portetelle D."/>
            <person name="Porwollik S."/>
            <person name="Prescott A.M."/>
            <person name="Presecan E."/>
            <person name="Pujic P."/>
            <person name="Purnelle B."/>
            <person name="Rapoport G."/>
            <person name="Rey M."/>
            <person name="Reynolds S."/>
            <person name="Rieger M."/>
            <person name="Rivolta C."/>
            <person name="Rocha E."/>
            <person name="Roche B."/>
            <person name="Rose M."/>
            <person name="Sadaie Y."/>
            <person name="Sato T."/>
            <person name="Scanlan E."/>
            <person name="Schleich S."/>
            <person name="Schroeter R."/>
            <person name="Scoffone F."/>
            <person name="Sekiguchi J."/>
            <person name="Sekowska A."/>
            <person name="Seror S.J."/>
            <person name="Serror P."/>
            <person name="Shin B.-S."/>
            <person name="Soldo B."/>
            <person name="Sorokin A."/>
            <person name="Tacconi E."/>
            <person name="Takagi T."/>
            <person name="Takahashi H."/>
            <person name="Takemaru K."/>
            <person name="Takeuchi M."/>
            <person name="Tamakoshi A."/>
            <person name="Tanaka T."/>
            <person name="Terpstra P."/>
            <person name="Tognoni A."/>
            <person name="Tosato V."/>
            <person name="Uchiyama S."/>
            <person name="Vandenbol M."/>
            <person name="Vannier F."/>
            <person name="Vassarotti A."/>
            <person name="Viari A."/>
            <person name="Wambutt R."/>
            <person name="Wedler E."/>
            <person name="Wedler H."/>
            <person name="Weitzenegger T."/>
            <person name="Winters P."/>
            <person name="Wipat A."/>
            <person name="Yamamoto H."/>
            <person name="Yamane K."/>
            <person name="Yasumoto K."/>
            <person name="Yata K."/>
            <person name="Yoshida K."/>
            <person name="Yoshikawa H.-F."/>
            <person name="Zumstein E."/>
            <person name="Yoshikawa H."/>
            <person name="Danchin A."/>
        </authorList>
    </citation>
    <scope>NUCLEOTIDE SEQUENCE [LARGE SCALE GENOMIC DNA]</scope>
    <source>
        <strain>168</strain>
    </source>
</reference>
<reference key="3">
    <citation type="journal article" date="2002" name="Mol. Microbiol.">
        <title>Global analysis of the Bacillus subtilis Fur regulon and the iron starvation stimulon.</title>
        <authorList>
            <person name="Baichoo N."/>
            <person name="Wang T."/>
            <person name="Ye R."/>
            <person name="Helmann J.D."/>
        </authorList>
    </citation>
    <scope>INDUCTION</scope>
    <source>
        <strain>168</strain>
    </source>
</reference>
<reference key="4">
    <citation type="journal article" date="2004" name="Electrophoresis">
        <title>Profiling and comprehensive expression analysis of ABC transporter solute-binding proteins of Bacillus subtilis membrane based on a proteomic approach.</title>
        <authorList>
            <person name="Bunai K."/>
            <person name="Ariga M."/>
            <person name="Inoue T."/>
            <person name="Nozaki M."/>
            <person name="Ogane S."/>
            <person name="Kakeshita H."/>
            <person name="Nemoto T."/>
            <person name="Nakanishi H."/>
            <person name="Yamane K."/>
        </authorList>
    </citation>
    <scope>IDENTIFICATION BY MASS SPECTROMETRY</scope>
    <scope>SUBCELLULAR LOCATION</scope>
    <source>
        <strain>168</strain>
    </source>
</reference>
<reference key="5">
    <citation type="journal article" date="2013" name="Mol. Microbiol.">
        <title>Flotillins functionally organize the bacterial membrane.</title>
        <authorList>
            <person name="Bach J.N."/>
            <person name="Bramkamp M."/>
        </authorList>
    </citation>
    <scope>INTERACTION WITH FLOT</scope>
    <scope>SUBCELLULAR LOCATION</scope>
    <source>
        <strain>168</strain>
    </source>
</reference>